<name>RL34_HELPS</name>
<comment type="similarity">
    <text evidence="1">Belongs to the bacterial ribosomal protein bL34 family.</text>
</comment>
<evidence type="ECO:0000255" key="1">
    <source>
        <dbReference type="HAMAP-Rule" id="MF_00391"/>
    </source>
</evidence>
<evidence type="ECO:0000305" key="2"/>
<reference key="1">
    <citation type="submission" date="2008-05" db="EMBL/GenBank/DDBJ databases">
        <title>Genome sequence of Helicobacter pylori from the remote Amazon: traces of Asian ancestry of the first Americans.</title>
        <authorList>
            <person name="Kersulyte D."/>
            <person name="Kalia A."/>
            <person name="Gilman R.H."/>
            <person name="Berg D.E."/>
        </authorList>
    </citation>
    <scope>NUCLEOTIDE SEQUENCE [LARGE SCALE GENOMIC DNA]</scope>
    <source>
        <strain>Shi470</strain>
    </source>
</reference>
<feature type="chain" id="PRO_1000196056" description="Large ribosomal subunit protein bL34">
    <location>
        <begin position="1"/>
        <end position="44"/>
    </location>
</feature>
<proteinExistence type="inferred from homology"/>
<keyword id="KW-0687">Ribonucleoprotein</keyword>
<keyword id="KW-0689">Ribosomal protein</keyword>
<accession>B2UVJ2</accession>
<protein>
    <recommendedName>
        <fullName evidence="1">Large ribosomal subunit protein bL34</fullName>
    </recommendedName>
    <alternativeName>
        <fullName evidence="2">50S ribosomal protein L34</fullName>
    </alternativeName>
</protein>
<dbReference type="EMBL" id="CP001072">
    <property type="protein sequence ID" value="ACD48874.1"/>
    <property type="molecule type" value="Genomic_DNA"/>
</dbReference>
<dbReference type="RefSeq" id="WP_001847286.1">
    <property type="nucleotide sequence ID" value="NC_010698.2"/>
</dbReference>
<dbReference type="SMR" id="B2UVJ2"/>
<dbReference type="GeneID" id="93236353"/>
<dbReference type="KEGG" id="hps:HPSH_07405"/>
<dbReference type="HOGENOM" id="CLU_129938_2_0_7"/>
<dbReference type="GO" id="GO:1990904">
    <property type="term" value="C:ribonucleoprotein complex"/>
    <property type="evidence" value="ECO:0007669"/>
    <property type="project" value="UniProtKB-KW"/>
</dbReference>
<dbReference type="GO" id="GO:0005840">
    <property type="term" value="C:ribosome"/>
    <property type="evidence" value="ECO:0007669"/>
    <property type="project" value="UniProtKB-KW"/>
</dbReference>
<dbReference type="GO" id="GO:0003735">
    <property type="term" value="F:structural constituent of ribosome"/>
    <property type="evidence" value="ECO:0007669"/>
    <property type="project" value="InterPro"/>
</dbReference>
<dbReference type="GO" id="GO:0006412">
    <property type="term" value="P:translation"/>
    <property type="evidence" value="ECO:0007669"/>
    <property type="project" value="UniProtKB-UniRule"/>
</dbReference>
<dbReference type="FunFam" id="1.10.287.3980:FF:000001">
    <property type="entry name" value="Mitochondrial ribosomal protein L34"/>
    <property type="match status" value="1"/>
</dbReference>
<dbReference type="Gene3D" id="1.10.287.3980">
    <property type="match status" value="1"/>
</dbReference>
<dbReference type="HAMAP" id="MF_00391">
    <property type="entry name" value="Ribosomal_bL34"/>
    <property type="match status" value="1"/>
</dbReference>
<dbReference type="InterPro" id="IPR000271">
    <property type="entry name" value="Ribosomal_bL34"/>
</dbReference>
<dbReference type="InterPro" id="IPR020939">
    <property type="entry name" value="Ribosomal_bL34_CS"/>
</dbReference>
<dbReference type="NCBIfam" id="TIGR01030">
    <property type="entry name" value="rpmH_bact"/>
    <property type="match status" value="1"/>
</dbReference>
<dbReference type="PANTHER" id="PTHR14503:SF4">
    <property type="entry name" value="LARGE RIBOSOMAL SUBUNIT PROTEIN BL34M"/>
    <property type="match status" value="1"/>
</dbReference>
<dbReference type="PANTHER" id="PTHR14503">
    <property type="entry name" value="MITOCHONDRIAL RIBOSOMAL PROTEIN 34 FAMILY MEMBER"/>
    <property type="match status" value="1"/>
</dbReference>
<dbReference type="Pfam" id="PF00468">
    <property type="entry name" value="Ribosomal_L34"/>
    <property type="match status" value="1"/>
</dbReference>
<dbReference type="PROSITE" id="PS00784">
    <property type="entry name" value="RIBOSOMAL_L34"/>
    <property type="match status" value="1"/>
</dbReference>
<sequence>MKRTYQPHNTPRKRTHGFLVRMKTKNGRKVINARRAKGRKKLSV</sequence>
<gene>
    <name evidence="1" type="primary">rpmH</name>
    <name type="ordered locus">HPSH_07405</name>
</gene>
<organism>
    <name type="scientific">Helicobacter pylori (strain Shi470)</name>
    <dbReference type="NCBI Taxonomy" id="512562"/>
    <lineage>
        <taxon>Bacteria</taxon>
        <taxon>Pseudomonadati</taxon>
        <taxon>Campylobacterota</taxon>
        <taxon>Epsilonproteobacteria</taxon>
        <taxon>Campylobacterales</taxon>
        <taxon>Helicobacteraceae</taxon>
        <taxon>Helicobacter</taxon>
    </lineage>
</organism>